<dbReference type="EMBL" id="CP000947">
    <property type="protein sequence ID" value="ACA32465.1"/>
    <property type="molecule type" value="Genomic_DNA"/>
</dbReference>
<dbReference type="RefSeq" id="WP_011609421.1">
    <property type="nucleotide sequence ID" value="NC_010519.1"/>
</dbReference>
<dbReference type="SMR" id="B0USN1"/>
<dbReference type="STRING" id="228400.HSM_0792"/>
<dbReference type="GeneID" id="31487081"/>
<dbReference type="KEGG" id="hsm:HSM_0792"/>
<dbReference type="HOGENOM" id="CLU_089554_2_0_6"/>
<dbReference type="GO" id="GO:0005886">
    <property type="term" value="C:plasma membrane"/>
    <property type="evidence" value="ECO:0007669"/>
    <property type="project" value="UniProtKB-SubCell"/>
</dbReference>
<dbReference type="HAMAP" id="MF_00189">
    <property type="entry name" value="YciB"/>
    <property type="match status" value="1"/>
</dbReference>
<dbReference type="InterPro" id="IPR006008">
    <property type="entry name" value="YciB"/>
</dbReference>
<dbReference type="NCBIfam" id="TIGR00997">
    <property type="entry name" value="ispZ"/>
    <property type="match status" value="1"/>
</dbReference>
<dbReference type="NCBIfam" id="NF001324">
    <property type="entry name" value="PRK00259.1-2"/>
    <property type="match status" value="1"/>
</dbReference>
<dbReference type="PANTHER" id="PTHR36917:SF1">
    <property type="entry name" value="INNER MEMBRANE-SPANNING PROTEIN YCIB"/>
    <property type="match status" value="1"/>
</dbReference>
<dbReference type="PANTHER" id="PTHR36917">
    <property type="entry name" value="INTRACELLULAR SEPTATION PROTEIN A-RELATED"/>
    <property type="match status" value="1"/>
</dbReference>
<dbReference type="Pfam" id="PF04279">
    <property type="entry name" value="IspA"/>
    <property type="match status" value="1"/>
</dbReference>
<reference key="1">
    <citation type="submission" date="2008-02" db="EMBL/GenBank/DDBJ databases">
        <title>Complete sequence of Haemophilus somnus 2336.</title>
        <authorList>
            <consortium name="US DOE Joint Genome Institute"/>
            <person name="Siddaramappa S."/>
            <person name="Duncan A.J."/>
            <person name="Challacombe J.F."/>
            <person name="Rainey D."/>
            <person name="Gillaspy A.F."/>
            <person name="Carson M."/>
            <person name="Gipson J."/>
            <person name="Gipson M."/>
            <person name="Bruce D."/>
            <person name="Detter J.C."/>
            <person name="Han C.S."/>
            <person name="Land M."/>
            <person name="Tapia R."/>
            <person name="Thompson L.S."/>
            <person name="Orvis J."/>
            <person name="Zaitshik J."/>
            <person name="Barnes G."/>
            <person name="Brettin T.S."/>
            <person name="Dyer D.W."/>
            <person name="Inzana T.J."/>
        </authorList>
    </citation>
    <scope>NUCLEOTIDE SEQUENCE [LARGE SCALE GENOMIC DNA]</scope>
    <source>
        <strain>2336</strain>
    </source>
</reference>
<accession>B0USN1</accession>
<comment type="function">
    <text evidence="1">Plays a role in cell envelope biogenesis, maintenance of cell envelope integrity and membrane homeostasis.</text>
</comment>
<comment type="subcellular location">
    <subcellularLocation>
        <location evidence="1">Cell inner membrane</location>
        <topology evidence="1">Multi-pass membrane protein</topology>
    </subcellularLocation>
</comment>
<comment type="similarity">
    <text evidence="1">Belongs to the YciB family.</text>
</comment>
<name>YCIB_HISS2</name>
<sequence>MKQLLEFIPLILFFAVYKLQGIQAAAITLIIATLIQLMILKLKYGKIEKQQLIMGSAVVFFGSLSAYFNELEFLKWKVTVVYALFSLILLVSQYGFKKPLIQQLLGKEIQLPTYVWHNLNLGWAVFFLLCMLINLYISQYLSDDIWVDFKTFGILGMTLIATLVTGVYIYRYLPKSEQE</sequence>
<protein>
    <recommendedName>
        <fullName evidence="1">Inner membrane-spanning protein YciB</fullName>
    </recommendedName>
</protein>
<gene>
    <name evidence="1" type="primary">yciB</name>
    <name type="ordered locus">HSM_0792</name>
</gene>
<organism>
    <name type="scientific">Histophilus somni (strain 2336)</name>
    <name type="common">Haemophilus somnus</name>
    <dbReference type="NCBI Taxonomy" id="228400"/>
    <lineage>
        <taxon>Bacteria</taxon>
        <taxon>Pseudomonadati</taxon>
        <taxon>Pseudomonadota</taxon>
        <taxon>Gammaproteobacteria</taxon>
        <taxon>Pasteurellales</taxon>
        <taxon>Pasteurellaceae</taxon>
        <taxon>Histophilus</taxon>
    </lineage>
</organism>
<proteinExistence type="inferred from homology"/>
<feature type="chain" id="PRO_1000098884" description="Inner membrane-spanning protein YciB">
    <location>
        <begin position="1"/>
        <end position="179"/>
    </location>
</feature>
<feature type="transmembrane region" description="Helical" evidence="1">
    <location>
        <begin position="11"/>
        <end position="31"/>
    </location>
</feature>
<feature type="transmembrane region" description="Helical" evidence="1">
    <location>
        <begin position="52"/>
        <end position="69"/>
    </location>
</feature>
<feature type="transmembrane region" description="Helical" evidence="1">
    <location>
        <begin position="71"/>
        <end position="91"/>
    </location>
</feature>
<feature type="transmembrane region" description="Helical" evidence="1">
    <location>
        <begin position="121"/>
        <end position="141"/>
    </location>
</feature>
<feature type="transmembrane region" description="Helical" evidence="1">
    <location>
        <begin position="149"/>
        <end position="169"/>
    </location>
</feature>
<keyword id="KW-0997">Cell inner membrane</keyword>
<keyword id="KW-1003">Cell membrane</keyword>
<keyword id="KW-0472">Membrane</keyword>
<keyword id="KW-0812">Transmembrane</keyword>
<keyword id="KW-1133">Transmembrane helix</keyword>
<evidence type="ECO:0000255" key="1">
    <source>
        <dbReference type="HAMAP-Rule" id="MF_00189"/>
    </source>
</evidence>